<name>TAL_PSEF5</name>
<gene>
    <name evidence="2" type="primary">tal</name>
    <name type="ordered locus">PFL_1974</name>
</gene>
<evidence type="ECO:0000250" key="1"/>
<evidence type="ECO:0000255" key="2">
    <source>
        <dbReference type="HAMAP-Rule" id="MF_00492"/>
    </source>
</evidence>
<dbReference type="EC" id="2.2.1.2" evidence="2"/>
<dbReference type="EMBL" id="CP000076">
    <property type="protein sequence ID" value="AAY91261.1"/>
    <property type="molecule type" value="Genomic_DNA"/>
</dbReference>
<dbReference type="RefSeq" id="WP_011060293.1">
    <property type="nucleotide sequence ID" value="NC_004129.6"/>
</dbReference>
<dbReference type="SMR" id="Q4KF90"/>
<dbReference type="STRING" id="220664.PFL_1974"/>
<dbReference type="GeneID" id="57475019"/>
<dbReference type="KEGG" id="pfl:PFL_1974"/>
<dbReference type="PATRIC" id="fig|220664.5.peg.2014"/>
<dbReference type="eggNOG" id="COG0176">
    <property type="taxonomic scope" value="Bacteria"/>
</dbReference>
<dbReference type="HOGENOM" id="CLU_047470_0_1_6"/>
<dbReference type="UniPathway" id="UPA00115">
    <property type="reaction ID" value="UER00414"/>
</dbReference>
<dbReference type="Proteomes" id="UP000008540">
    <property type="component" value="Chromosome"/>
</dbReference>
<dbReference type="GO" id="GO:0005829">
    <property type="term" value="C:cytosol"/>
    <property type="evidence" value="ECO:0007669"/>
    <property type="project" value="TreeGrafter"/>
</dbReference>
<dbReference type="GO" id="GO:0004801">
    <property type="term" value="F:transaldolase activity"/>
    <property type="evidence" value="ECO:0000250"/>
    <property type="project" value="UniProtKB"/>
</dbReference>
<dbReference type="GO" id="GO:0005975">
    <property type="term" value="P:carbohydrate metabolic process"/>
    <property type="evidence" value="ECO:0007669"/>
    <property type="project" value="InterPro"/>
</dbReference>
<dbReference type="GO" id="GO:0006098">
    <property type="term" value="P:pentose-phosphate shunt"/>
    <property type="evidence" value="ECO:0007669"/>
    <property type="project" value="UniProtKB-UniRule"/>
</dbReference>
<dbReference type="CDD" id="cd00957">
    <property type="entry name" value="Transaldolase_TalAB"/>
    <property type="match status" value="1"/>
</dbReference>
<dbReference type="FunFam" id="3.20.20.70:FF:000002">
    <property type="entry name" value="Transaldolase"/>
    <property type="match status" value="1"/>
</dbReference>
<dbReference type="Gene3D" id="3.20.20.70">
    <property type="entry name" value="Aldolase class I"/>
    <property type="match status" value="1"/>
</dbReference>
<dbReference type="HAMAP" id="MF_00492">
    <property type="entry name" value="Transaldolase_1"/>
    <property type="match status" value="1"/>
</dbReference>
<dbReference type="InterPro" id="IPR013785">
    <property type="entry name" value="Aldolase_TIM"/>
</dbReference>
<dbReference type="InterPro" id="IPR001585">
    <property type="entry name" value="TAL/FSA"/>
</dbReference>
<dbReference type="InterPro" id="IPR004730">
    <property type="entry name" value="Transaldolase_1"/>
</dbReference>
<dbReference type="InterPro" id="IPR018225">
    <property type="entry name" value="Transaldolase_AS"/>
</dbReference>
<dbReference type="NCBIfam" id="NF009001">
    <property type="entry name" value="PRK12346.1"/>
    <property type="match status" value="1"/>
</dbReference>
<dbReference type="NCBIfam" id="TIGR00874">
    <property type="entry name" value="talAB"/>
    <property type="match status" value="1"/>
</dbReference>
<dbReference type="PANTHER" id="PTHR10683">
    <property type="entry name" value="TRANSALDOLASE"/>
    <property type="match status" value="1"/>
</dbReference>
<dbReference type="PANTHER" id="PTHR10683:SF18">
    <property type="entry name" value="TRANSALDOLASE"/>
    <property type="match status" value="1"/>
</dbReference>
<dbReference type="Pfam" id="PF00923">
    <property type="entry name" value="TAL_FSA"/>
    <property type="match status" value="1"/>
</dbReference>
<dbReference type="SUPFAM" id="SSF51569">
    <property type="entry name" value="Aldolase"/>
    <property type="match status" value="1"/>
</dbReference>
<dbReference type="PROSITE" id="PS01054">
    <property type="entry name" value="TRANSALDOLASE_1"/>
    <property type="match status" value="1"/>
</dbReference>
<dbReference type="PROSITE" id="PS00958">
    <property type="entry name" value="TRANSALDOLASE_2"/>
    <property type="match status" value="1"/>
</dbReference>
<organism>
    <name type="scientific">Pseudomonas fluorescens (strain ATCC BAA-477 / NRRL B-23932 / Pf-5)</name>
    <dbReference type="NCBI Taxonomy" id="220664"/>
    <lineage>
        <taxon>Bacteria</taxon>
        <taxon>Pseudomonadati</taxon>
        <taxon>Pseudomonadota</taxon>
        <taxon>Gammaproteobacteria</taxon>
        <taxon>Pseudomonadales</taxon>
        <taxon>Pseudomonadaceae</taxon>
        <taxon>Pseudomonas</taxon>
    </lineage>
</organism>
<comment type="function">
    <text evidence="2">Transaldolase is important for the balance of metabolites in the pentose-phosphate pathway.</text>
</comment>
<comment type="catalytic activity">
    <reaction evidence="2">
        <text>D-sedoheptulose 7-phosphate + D-glyceraldehyde 3-phosphate = D-erythrose 4-phosphate + beta-D-fructose 6-phosphate</text>
        <dbReference type="Rhea" id="RHEA:17053"/>
        <dbReference type="ChEBI" id="CHEBI:16897"/>
        <dbReference type="ChEBI" id="CHEBI:57483"/>
        <dbReference type="ChEBI" id="CHEBI:57634"/>
        <dbReference type="ChEBI" id="CHEBI:59776"/>
        <dbReference type="EC" id="2.2.1.2"/>
    </reaction>
</comment>
<comment type="pathway">
    <text evidence="2">Carbohydrate degradation; pentose phosphate pathway; D-glyceraldehyde 3-phosphate and beta-D-fructose 6-phosphate from D-ribose 5-phosphate and D-xylulose 5-phosphate (non-oxidative stage): step 2/3.</text>
</comment>
<comment type="subunit">
    <text evidence="1">Homodimer.</text>
</comment>
<comment type="subcellular location">
    <subcellularLocation>
        <location evidence="2">Cytoplasm</location>
    </subcellularLocation>
</comment>
<comment type="similarity">
    <text evidence="2">Belongs to the transaldolase family. Type 1 subfamily.</text>
</comment>
<accession>Q4KF90</accession>
<proteinExistence type="inferred from homology"/>
<keyword id="KW-0963">Cytoplasm</keyword>
<keyword id="KW-0570">Pentose shunt</keyword>
<keyword id="KW-0704">Schiff base</keyword>
<keyword id="KW-0808">Transferase</keyword>
<reference key="1">
    <citation type="journal article" date="2005" name="Nat. Biotechnol.">
        <title>Complete genome sequence of the plant commensal Pseudomonas fluorescens Pf-5.</title>
        <authorList>
            <person name="Paulsen I.T."/>
            <person name="Press C.M."/>
            <person name="Ravel J."/>
            <person name="Kobayashi D.Y."/>
            <person name="Myers G.S.A."/>
            <person name="Mavrodi D.V."/>
            <person name="DeBoy R.T."/>
            <person name="Seshadri R."/>
            <person name="Ren Q."/>
            <person name="Madupu R."/>
            <person name="Dodson R.J."/>
            <person name="Durkin A.S."/>
            <person name="Brinkac L.M."/>
            <person name="Daugherty S.C."/>
            <person name="Sullivan S.A."/>
            <person name="Rosovitz M.J."/>
            <person name="Gwinn M.L."/>
            <person name="Zhou L."/>
            <person name="Schneider D.J."/>
            <person name="Cartinhour S.W."/>
            <person name="Nelson W.C."/>
            <person name="Weidman J."/>
            <person name="Watkins K."/>
            <person name="Tran K."/>
            <person name="Khouri H."/>
            <person name="Pierson E.A."/>
            <person name="Pierson L.S. III"/>
            <person name="Thomashow L.S."/>
            <person name="Loper J.E."/>
        </authorList>
    </citation>
    <scope>NUCLEOTIDE SEQUENCE [LARGE SCALE GENOMIC DNA]</scope>
    <source>
        <strain>ATCC BAA-477 / NRRL B-23932 / Pf-5</strain>
    </source>
</reference>
<protein>
    <recommendedName>
        <fullName evidence="2">Transaldolase</fullName>
        <ecNumber evidence="2">2.2.1.2</ecNumber>
    </recommendedName>
</protein>
<sequence>MTSKLEQLKKITTVVADTGDFDAIARVKPVDATTNPSLLLKAAAIPGYADLLNACVNDCKGDVGLASDRFGVAVGQEILKVIPGRISTEVDARLSFDTEAMLKRAHRLIELYDKAGIGRDRVLIKIASTWEGIRAAEKLEREGIQTNLTLLFSFAQAVACAEAGVFLISPFVGRIYDWYKKATGNDYQGADDPGVQSVTRIYNYYKANDYKTVVMGASFRNLNQIEQLAGCDRLTISPDLIEKLAADTGKLERKLSPGKTGEARQSLNEAQFRWASNEDAMATEKLAEGIRQFARDQEKLEALLAAKL</sequence>
<feature type="chain" id="PRO_0000230961" description="Transaldolase">
    <location>
        <begin position="1"/>
        <end position="308"/>
    </location>
</feature>
<feature type="active site" description="Schiff-base intermediate with substrate" evidence="2">
    <location>
        <position position="125"/>
    </location>
</feature>